<protein>
    <recommendedName>
        <fullName>Small membrane A-kinase anchor protein</fullName>
        <shortName>Small membrane AKAP</shortName>
        <shortName>smAKAP</shortName>
    </recommendedName>
</protein>
<keyword id="KW-1003">Cell membrane</keyword>
<keyword id="KW-0449">Lipoprotein</keyword>
<keyword id="KW-0472">Membrane</keyword>
<keyword id="KW-0519">Myristate</keyword>
<keyword id="KW-0564">Palmitate</keyword>
<keyword id="KW-1185">Reference proteome</keyword>
<accession>P0C8Y7</accession>
<feature type="initiator methionine" description="Removed" evidence="2">
    <location>
        <position position="1"/>
    </location>
</feature>
<feature type="chain" id="PRO_0000366966" description="Small membrane A-kinase anchor protein">
    <location>
        <begin position="2"/>
        <end position="91"/>
    </location>
</feature>
<feature type="lipid moiety-binding region" description="N-myristoyl glycine" evidence="2">
    <location>
        <position position="2"/>
    </location>
</feature>
<proteinExistence type="inferred from homology"/>
<organism>
    <name type="scientific">Xenopus tropicalis</name>
    <name type="common">Western clawed frog</name>
    <name type="synonym">Silurana tropicalis</name>
    <dbReference type="NCBI Taxonomy" id="8364"/>
    <lineage>
        <taxon>Eukaryota</taxon>
        <taxon>Metazoa</taxon>
        <taxon>Chordata</taxon>
        <taxon>Craniata</taxon>
        <taxon>Vertebrata</taxon>
        <taxon>Euteleostomi</taxon>
        <taxon>Amphibia</taxon>
        <taxon>Batrachia</taxon>
        <taxon>Anura</taxon>
        <taxon>Pipoidea</taxon>
        <taxon>Pipidae</taxon>
        <taxon>Xenopodinae</taxon>
        <taxon>Xenopus</taxon>
        <taxon>Silurana</taxon>
    </lineage>
</organism>
<comment type="function">
    <text evidence="1">Binds to type I regulatory subunits of protein kinase A and may anchor/target them to the plasma membrane.</text>
</comment>
<comment type="subcellular location">
    <subcellularLocation>
        <location evidence="1">Cell membrane</location>
    </subcellularLocation>
</comment>
<comment type="PTM">
    <text evidence="1">May be palmitoylated at Cys-3.</text>
</comment>
<comment type="similarity">
    <text evidence="3">Belongs to the small membrane AKAP family.</text>
</comment>
<reference key="1">
    <citation type="submission" date="2005-02" db="EMBL/GenBank/DDBJ databases">
        <authorList>
            <consortium name="NIH - Xenopus Gene Collection (XGC) project"/>
        </authorList>
    </citation>
    <scope>NUCLEOTIDE SEQUENCE [LARGE SCALE MRNA]</scope>
    <source>
        <tissue>Intestine</tissue>
    </source>
</reference>
<sequence>MGCIKSKQECNLHKTIRLKRNKENDEMHNKEKVCLVQANQEDSKFCSCTASPLLLEYAHRLSEDIVNKAVRQWAEVDSKYSDIPYIESDAV</sequence>
<name>SMAKA_XENTR</name>
<dbReference type="EMBL" id="CX995067">
    <property type="status" value="NOT_ANNOTATED_CDS"/>
    <property type="molecule type" value="mRNA"/>
</dbReference>
<dbReference type="SMR" id="P0C8Y7"/>
<dbReference type="FunCoup" id="P0C8Y7">
    <property type="interactions" value="63"/>
</dbReference>
<dbReference type="STRING" id="8364.ENSXETP00000007783"/>
<dbReference type="PaxDb" id="8364-ENSXETP00000063125"/>
<dbReference type="eggNOG" id="ENOG502S8S1">
    <property type="taxonomic scope" value="Eukaryota"/>
</dbReference>
<dbReference type="HOGENOM" id="CLU_187810_0_0_1"/>
<dbReference type="InParanoid" id="P0C8Y7"/>
<dbReference type="Proteomes" id="UP000008143">
    <property type="component" value="Unplaced"/>
</dbReference>
<dbReference type="Bgee" id="ENSXETG00000029994">
    <property type="expression patterns" value="Expressed in brain and 3 other cell types or tissues"/>
</dbReference>
<dbReference type="ExpressionAtlas" id="P0C8Y7">
    <property type="expression patterns" value="baseline"/>
</dbReference>
<dbReference type="GO" id="GO:0005886">
    <property type="term" value="C:plasma membrane"/>
    <property type="evidence" value="ECO:0007669"/>
    <property type="project" value="UniProtKB-SubCell"/>
</dbReference>
<dbReference type="GO" id="GO:0034237">
    <property type="term" value="F:protein kinase A regulatory subunit binding"/>
    <property type="evidence" value="ECO:0007669"/>
    <property type="project" value="InterPro"/>
</dbReference>
<dbReference type="InterPro" id="IPR027969">
    <property type="entry name" value="Small_membr_AKAP"/>
</dbReference>
<dbReference type="PANTHER" id="PTHR36471">
    <property type="entry name" value="SMALL MEMBRANE A-KINASE ANCHOR PROTEIN"/>
    <property type="match status" value="1"/>
</dbReference>
<dbReference type="PANTHER" id="PTHR36471:SF1">
    <property type="entry name" value="SMALL MEMBRANE A-KINASE ANCHOR PROTEIN"/>
    <property type="match status" value="1"/>
</dbReference>
<dbReference type="Pfam" id="PF15127">
    <property type="entry name" value="SmAKAP"/>
    <property type="match status" value="1"/>
</dbReference>
<evidence type="ECO:0000250" key="1"/>
<evidence type="ECO:0000255" key="2"/>
<evidence type="ECO:0000305" key="3"/>